<evidence type="ECO:0000255" key="1">
    <source>
        <dbReference type="HAMAP-Rule" id="MF_01366"/>
    </source>
</evidence>
<evidence type="ECO:0000256" key="2">
    <source>
        <dbReference type="SAM" id="MobiDB-lite"/>
    </source>
</evidence>
<evidence type="ECO:0000305" key="3"/>
<comment type="function">
    <text evidence="1">This protein is one of the early assembly proteins of the 50S ribosomal subunit, although it is not seen to bind rRNA by itself. It is important during the early stages of 50S assembly.</text>
</comment>
<comment type="subunit">
    <text evidence="1">Part of the 50S ribosomal subunit.</text>
</comment>
<comment type="similarity">
    <text evidence="1">Belongs to the universal ribosomal protein uL13 family.</text>
</comment>
<organism>
    <name type="scientific">Methylorubrum extorquens (strain PA1)</name>
    <name type="common">Methylobacterium extorquens</name>
    <dbReference type="NCBI Taxonomy" id="419610"/>
    <lineage>
        <taxon>Bacteria</taxon>
        <taxon>Pseudomonadati</taxon>
        <taxon>Pseudomonadota</taxon>
        <taxon>Alphaproteobacteria</taxon>
        <taxon>Hyphomicrobiales</taxon>
        <taxon>Methylobacteriaceae</taxon>
        <taxon>Methylorubrum</taxon>
    </lineage>
</organism>
<reference key="1">
    <citation type="submission" date="2007-12" db="EMBL/GenBank/DDBJ databases">
        <title>Complete sequence of Methylobacterium extorquens PA1.</title>
        <authorList>
            <consortium name="US DOE Joint Genome Institute"/>
            <person name="Copeland A."/>
            <person name="Lucas S."/>
            <person name="Lapidus A."/>
            <person name="Barry K."/>
            <person name="Glavina del Rio T."/>
            <person name="Dalin E."/>
            <person name="Tice H."/>
            <person name="Pitluck S."/>
            <person name="Saunders E."/>
            <person name="Brettin T."/>
            <person name="Bruce D."/>
            <person name="Detter J.C."/>
            <person name="Han C."/>
            <person name="Schmutz J."/>
            <person name="Larimer F."/>
            <person name="Land M."/>
            <person name="Hauser L."/>
            <person name="Kyrpides N."/>
            <person name="Kim E."/>
            <person name="Marx C."/>
            <person name="Richardson P."/>
        </authorList>
    </citation>
    <scope>NUCLEOTIDE SEQUENCE [LARGE SCALE GENOMIC DNA]</scope>
    <source>
        <strain>PA1</strain>
    </source>
</reference>
<protein>
    <recommendedName>
        <fullName evidence="1">Large ribosomal subunit protein uL13</fullName>
    </recommendedName>
    <alternativeName>
        <fullName evidence="3">50S ribosomal protein L13</fullName>
    </alternativeName>
</protein>
<proteinExistence type="inferred from homology"/>
<gene>
    <name evidence="1" type="primary">rplM</name>
    <name type="ordered locus">Mext_2619</name>
</gene>
<dbReference type="EMBL" id="CP000908">
    <property type="protein sequence ID" value="ABY31011.1"/>
    <property type="molecule type" value="Genomic_DNA"/>
</dbReference>
<dbReference type="RefSeq" id="WP_004446860.1">
    <property type="nucleotide sequence ID" value="NC_010172.1"/>
</dbReference>
<dbReference type="SMR" id="A9W605"/>
<dbReference type="GeneID" id="72990248"/>
<dbReference type="KEGG" id="mex:Mext_2619"/>
<dbReference type="eggNOG" id="COG0102">
    <property type="taxonomic scope" value="Bacteria"/>
</dbReference>
<dbReference type="HOGENOM" id="CLU_082184_2_2_5"/>
<dbReference type="BioCyc" id="MEXT419610:MEXT_RS13195-MONOMER"/>
<dbReference type="GO" id="GO:0022625">
    <property type="term" value="C:cytosolic large ribosomal subunit"/>
    <property type="evidence" value="ECO:0007669"/>
    <property type="project" value="TreeGrafter"/>
</dbReference>
<dbReference type="GO" id="GO:0003729">
    <property type="term" value="F:mRNA binding"/>
    <property type="evidence" value="ECO:0007669"/>
    <property type="project" value="TreeGrafter"/>
</dbReference>
<dbReference type="GO" id="GO:0003735">
    <property type="term" value="F:structural constituent of ribosome"/>
    <property type="evidence" value="ECO:0007669"/>
    <property type="project" value="InterPro"/>
</dbReference>
<dbReference type="GO" id="GO:0017148">
    <property type="term" value="P:negative regulation of translation"/>
    <property type="evidence" value="ECO:0007669"/>
    <property type="project" value="TreeGrafter"/>
</dbReference>
<dbReference type="GO" id="GO:0006412">
    <property type="term" value="P:translation"/>
    <property type="evidence" value="ECO:0007669"/>
    <property type="project" value="UniProtKB-UniRule"/>
</dbReference>
<dbReference type="CDD" id="cd00392">
    <property type="entry name" value="Ribosomal_L13"/>
    <property type="match status" value="1"/>
</dbReference>
<dbReference type="FunFam" id="3.90.1180.10:FF:000001">
    <property type="entry name" value="50S ribosomal protein L13"/>
    <property type="match status" value="1"/>
</dbReference>
<dbReference type="Gene3D" id="3.90.1180.10">
    <property type="entry name" value="Ribosomal protein L13"/>
    <property type="match status" value="1"/>
</dbReference>
<dbReference type="HAMAP" id="MF_01366">
    <property type="entry name" value="Ribosomal_uL13"/>
    <property type="match status" value="1"/>
</dbReference>
<dbReference type="InterPro" id="IPR005822">
    <property type="entry name" value="Ribosomal_uL13"/>
</dbReference>
<dbReference type="InterPro" id="IPR005823">
    <property type="entry name" value="Ribosomal_uL13_bac-type"/>
</dbReference>
<dbReference type="InterPro" id="IPR036899">
    <property type="entry name" value="Ribosomal_uL13_sf"/>
</dbReference>
<dbReference type="NCBIfam" id="TIGR01066">
    <property type="entry name" value="rplM_bact"/>
    <property type="match status" value="1"/>
</dbReference>
<dbReference type="PANTHER" id="PTHR11545:SF2">
    <property type="entry name" value="LARGE RIBOSOMAL SUBUNIT PROTEIN UL13M"/>
    <property type="match status" value="1"/>
</dbReference>
<dbReference type="PANTHER" id="PTHR11545">
    <property type="entry name" value="RIBOSOMAL PROTEIN L13"/>
    <property type="match status" value="1"/>
</dbReference>
<dbReference type="Pfam" id="PF00572">
    <property type="entry name" value="Ribosomal_L13"/>
    <property type="match status" value="1"/>
</dbReference>
<dbReference type="PIRSF" id="PIRSF002181">
    <property type="entry name" value="Ribosomal_L13"/>
    <property type="match status" value="1"/>
</dbReference>
<dbReference type="SUPFAM" id="SSF52161">
    <property type="entry name" value="Ribosomal protein L13"/>
    <property type="match status" value="1"/>
</dbReference>
<name>RL13_METEP</name>
<feature type="chain" id="PRO_1000144148" description="Large ribosomal subunit protein uL13">
    <location>
        <begin position="1"/>
        <end position="153"/>
    </location>
</feature>
<feature type="region of interest" description="Disordered" evidence="2">
    <location>
        <begin position="134"/>
        <end position="153"/>
    </location>
</feature>
<keyword id="KW-0687">Ribonucleoprotein</keyword>
<keyword id="KW-0689">Ribosomal protein</keyword>
<sequence length="153" mass="17173">MKTTSLKPADVDKKWVVIDAEGLVVGRLASIVAMRLRGKHKPAYTPHVDCGDHVIVINADKVKFTGRKYDQKVYYHHTGYPGGIKERSAKFILEGRFPERVVEKAVERMLPRGPLFRQILGHLRVYKGAAHPHEAQQPQALDVGSLNRKNVSA</sequence>
<accession>A9W605</accession>